<comment type="function">
    <text evidence="1 9">Involved in elastic and collagen fibers formation. It is required for EFEMP2 deposition into the extracellular matrix, and collagen network assembly and cross-linking via protein-lysine 6-oxidase/LOX activity (PubMed:36351433). May be responsible for anchoring smooth muscle cells to elastic fibers, and may be involved the processes that regulate vessel assembly. Has cell adhesive capacity (By similarity). May have a function in placenta formation and initial organogenesis and a later role in interstitial connective tissue.</text>
</comment>
<comment type="subunit">
    <text evidence="1 8">Homotrimer associated through a moderately stable interaction of the C-terminal globular C1q domains, allowing the nucleation of the triple helix and then a further quaternary assembly to higher-order polymers via intermolecular disulfide bonds. Interacts with EMILIN2 (By similarity). Interacts with EFEMP2; this interaction promotes the incorporation of EFEMP2 into the extracellular matrix (PubMed:28717224).</text>
</comment>
<comment type="interaction">
    <interactant intactId="EBI-906561">
        <id>Q99K41</id>
    </interactant>
    <interactant intactId="EBI-907660">
        <id>P07200</id>
        <label>TGFB1</label>
    </interactant>
    <organismsDiffer>true</organismsDiffer>
    <experiments>2</experiments>
</comment>
<comment type="subcellular location">
    <subcellularLocation>
        <location evidence="2">Secreted</location>
        <location evidence="2">Extracellular space</location>
        <location evidence="2">Extracellular matrix</location>
    </subcellularLocation>
    <text evidence="2">Found mainly at the interface between amorphous elastin and microfibrils.</text>
</comment>
<comment type="developmental stage">
    <text evidence="7">Detectable in morula and blastocyst. First expressed in ectoplacental cone in embryos of 6.5 days and in extraembryonic visceral endoderm at 7.5 days. Expressed also in the allantois. Expression in the ectoplacental cone-derived secondary trophoblast giant cells and spongiotrophoblast is strong up to 11.5 days and then declines. In the embryo, high levels are initially expressed in blood vessels, perineural mesenchyme and somites at 8.5 days. Later on, intense expression is identified in the mesenchymal component of organs anlage (ie lung and liver) and different mesenchymal condensations (ie limb bud and branchial arches). At late gestation expression is widely distributed in interstitial connective tissue and smooth muscle cell-rich tissues.</text>
</comment>
<comment type="disruption phenotype">
    <text evidence="9">Dermal collagen fibrils are thin and curly, and collagen cross-links and EFEMP2 fiber formation are significantly reduced in knockout mice compared to control. Knockout animals have an altered bone microarchitecture with decreased trabecular bone.</text>
</comment>
<proteinExistence type="evidence at protein level"/>
<dbReference type="EMBL" id="AK029337">
    <property type="protein sequence ID" value="BAC26403.1"/>
    <property type="molecule type" value="mRNA"/>
</dbReference>
<dbReference type="EMBL" id="BC005481">
    <property type="protein sequence ID" value="AAH05481.1"/>
    <property type="molecule type" value="mRNA"/>
</dbReference>
<dbReference type="CCDS" id="CCDS19167.1"/>
<dbReference type="RefSeq" id="NP_598679.1">
    <property type="nucleotide sequence ID" value="NM_133918.2"/>
</dbReference>
<dbReference type="SMR" id="Q99K41"/>
<dbReference type="BioGRID" id="221560">
    <property type="interactions" value="1"/>
</dbReference>
<dbReference type="ComplexPortal" id="CPX-437">
    <property type="entry name" value="EMILIN-1 complex"/>
</dbReference>
<dbReference type="FunCoup" id="Q99K41">
    <property type="interactions" value="214"/>
</dbReference>
<dbReference type="IntAct" id="Q99K41">
    <property type="interactions" value="3"/>
</dbReference>
<dbReference type="STRING" id="10090.ENSMUSP00000031055"/>
<dbReference type="GlyCosmos" id="Q99K41">
    <property type="glycosylation" value="7 sites, No reported glycans"/>
</dbReference>
<dbReference type="GlyGen" id="Q99K41">
    <property type="glycosylation" value="7 sites, 4 N-linked glycans (5 sites)"/>
</dbReference>
<dbReference type="iPTMnet" id="Q99K41"/>
<dbReference type="PhosphoSitePlus" id="Q99K41"/>
<dbReference type="SwissPalm" id="Q99K41"/>
<dbReference type="jPOST" id="Q99K41"/>
<dbReference type="PaxDb" id="10090-ENSMUSP00000031055"/>
<dbReference type="PeptideAtlas" id="Q99K41"/>
<dbReference type="ProteomicsDB" id="275861"/>
<dbReference type="Pumba" id="Q99K41"/>
<dbReference type="Antibodypedia" id="1001">
    <property type="antibodies" value="206 antibodies from 24 providers"/>
</dbReference>
<dbReference type="Ensembl" id="ENSMUST00000031055.8">
    <property type="protein sequence ID" value="ENSMUSP00000031055.6"/>
    <property type="gene ID" value="ENSMUSG00000029163.10"/>
</dbReference>
<dbReference type="GeneID" id="100952"/>
<dbReference type="KEGG" id="mmu:100952"/>
<dbReference type="UCSC" id="uc008wwm.1">
    <property type="organism name" value="mouse"/>
</dbReference>
<dbReference type="AGR" id="MGI:1926189"/>
<dbReference type="CTD" id="11117"/>
<dbReference type="MGI" id="MGI:1926189">
    <property type="gene designation" value="Emilin1"/>
</dbReference>
<dbReference type="VEuPathDB" id="HostDB:ENSMUSG00000029163"/>
<dbReference type="eggNOG" id="ENOG502RIZH">
    <property type="taxonomic scope" value="Eukaryota"/>
</dbReference>
<dbReference type="GeneTree" id="ENSGT01030000234633"/>
<dbReference type="HOGENOM" id="CLU_319805_0_0_1"/>
<dbReference type="InParanoid" id="Q99K41"/>
<dbReference type="OMA" id="CTQICTE"/>
<dbReference type="OrthoDB" id="9880922at2759"/>
<dbReference type="PhylomeDB" id="Q99K41"/>
<dbReference type="TreeFam" id="TF331033"/>
<dbReference type="Reactome" id="R-MMU-2129379">
    <property type="pathway name" value="Molecules associated with elastic fibres"/>
</dbReference>
<dbReference type="BioGRID-ORCS" id="100952">
    <property type="hits" value="3 hits in 77 CRISPR screens"/>
</dbReference>
<dbReference type="ChiTaRS" id="Emilin1">
    <property type="organism name" value="mouse"/>
</dbReference>
<dbReference type="PRO" id="PR:Q99K41"/>
<dbReference type="Proteomes" id="UP000000589">
    <property type="component" value="Chromosome 5"/>
</dbReference>
<dbReference type="RNAct" id="Q99K41">
    <property type="molecule type" value="protein"/>
</dbReference>
<dbReference type="Bgee" id="ENSMUSG00000029163">
    <property type="expression patterns" value="Expressed in ectoplacental cone and 156 other cell types or tissues"/>
</dbReference>
<dbReference type="GO" id="GO:0005581">
    <property type="term" value="C:collagen trimer"/>
    <property type="evidence" value="ECO:0007669"/>
    <property type="project" value="UniProtKB-KW"/>
</dbReference>
<dbReference type="GO" id="GO:0062023">
    <property type="term" value="C:collagen-containing extracellular matrix"/>
    <property type="evidence" value="ECO:0007005"/>
    <property type="project" value="UniProtKB"/>
</dbReference>
<dbReference type="GO" id="GO:1990971">
    <property type="term" value="C:EMILIN complex"/>
    <property type="evidence" value="ECO:0000266"/>
    <property type="project" value="ComplexPortal"/>
</dbReference>
<dbReference type="GO" id="GO:0031012">
    <property type="term" value="C:extracellular matrix"/>
    <property type="evidence" value="ECO:0000314"/>
    <property type="project" value="MGI"/>
</dbReference>
<dbReference type="GO" id="GO:0005576">
    <property type="term" value="C:extracellular region"/>
    <property type="evidence" value="ECO:0000304"/>
    <property type="project" value="Reactome"/>
</dbReference>
<dbReference type="GO" id="GO:0005615">
    <property type="term" value="C:extracellular space"/>
    <property type="evidence" value="ECO:0007005"/>
    <property type="project" value="BHF-UCL"/>
</dbReference>
<dbReference type="GO" id="GO:0034668">
    <property type="term" value="C:integrin alpha4-beta1 complex"/>
    <property type="evidence" value="ECO:0007669"/>
    <property type="project" value="Ensembl"/>
</dbReference>
<dbReference type="GO" id="GO:0030023">
    <property type="term" value="F:extracellular matrix constituent conferring elasticity"/>
    <property type="evidence" value="ECO:0000315"/>
    <property type="project" value="MGI"/>
</dbReference>
<dbReference type="GO" id="GO:0042802">
    <property type="term" value="F:identical protein binding"/>
    <property type="evidence" value="ECO:0000314"/>
    <property type="project" value="MGI"/>
</dbReference>
<dbReference type="GO" id="GO:0098640">
    <property type="term" value="F:integrin binding involved in cell-matrix adhesion"/>
    <property type="evidence" value="ECO:0007669"/>
    <property type="project" value="Ensembl"/>
</dbReference>
<dbReference type="GO" id="GO:0060090">
    <property type="term" value="F:molecular adaptor activity"/>
    <property type="evidence" value="ECO:0007669"/>
    <property type="project" value="Ensembl"/>
</dbReference>
<dbReference type="GO" id="GO:0003180">
    <property type="term" value="P:aortic valve morphogenesis"/>
    <property type="evidence" value="ECO:0000315"/>
    <property type="project" value="BHF-UCL"/>
</dbReference>
<dbReference type="GO" id="GO:0033627">
    <property type="term" value="P:cell adhesion mediated by integrin"/>
    <property type="evidence" value="ECO:0000314"/>
    <property type="project" value="ComplexPortal"/>
</dbReference>
<dbReference type="GO" id="GO:0016477">
    <property type="term" value="P:cell migration"/>
    <property type="evidence" value="ECO:0007669"/>
    <property type="project" value="Ensembl"/>
</dbReference>
<dbReference type="GO" id="GO:0048251">
    <property type="term" value="P:elastic fiber assembly"/>
    <property type="evidence" value="ECO:0000315"/>
    <property type="project" value="BHF-UCL"/>
</dbReference>
<dbReference type="GO" id="GO:0030198">
    <property type="term" value="P:extracellular matrix organization"/>
    <property type="evidence" value="ECO:0000314"/>
    <property type="project" value="MGI"/>
</dbReference>
<dbReference type="GO" id="GO:0016525">
    <property type="term" value="P:negative regulation of angiogenesis"/>
    <property type="evidence" value="ECO:0000315"/>
    <property type="project" value="BHF-UCL"/>
</dbReference>
<dbReference type="GO" id="GO:0050866">
    <property type="term" value="P:negative regulation of cell activation"/>
    <property type="evidence" value="ECO:0000315"/>
    <property type="project" value="BHF-UCL"/>
</dbReference>
<dbReference type="GO" id="GO:0030336">
    <property type="term" value="P:negative regulation of cell migration"/>
    <property type="evidence" value="ECO:0000250"/>
    <property type="project" value="ComplexPortal"/>
</dbReference>
<dbReference type="GO" id="GO:0032966">
    <property type="term" value="P:negative regulation of collagen biosynthetic process"/>
    <property type="evidence" value="ECO:0000315"/>
    <property type="project" value="BHF-UCL"/>
</dbReference>
<dbReference type="GO" id="GO:1904027">
    <property type="term" value="P:negative regulation of collagen fibril organization"/>
    <property type="evidence" value="ECO:0000315"/>
    <property type="project" value="BHF-UCL"/>
</dbReference>
<dbReference type="GO" id="GO:0070373">
    <property type="term" value="P:negative regulation of ERK1 and ERK2 cascade"/>
    <property type="evidence" value="ECO:0000315"/>
    <property type="project" value="BHF-UCL"/>
</dbReference>
<dbReference type="GO" id="GO:0010629">
    <property type="term" value="P:negative regulation of gene expression"/>
    <property type="evidence" value="ECO:0000315"/>
    <property type="project" value="BHF-UCL"/>
</dbReference>
<dbReference type="GO" id="GO:1905522">
    <property type="term" value="P:negative regulation of macrophage migration"/>
    <property type="evidence" value="ECO:0000315"/>
    <property type="project" value="BHF-UCL"/>
</dbReference>
<dbReference type="GO" id="GO:0060392">
    <property type="term" value="P:negative regulation of SMAD protein signal transduction"/>
    <property type="evidence" value="ECO:0000315"/>
    <property type="project" value="BHF-UCL"/>
</dbReference>
<dbReference type="GO" id="GO:0030512">
    <property type="term" value="P:negative regulation of transforming growth factor beta receptor signaling pathway"/>
    <property type="evidence" value="ECO:0000315"/>
    <property type="project" value="BHF-UCL"/>
</dbReference>
<dbReference type="GO" id="GO:0030948">
    <property type="term" value="P:negative regulation of vascular endothelial growth factor receptor signaling pathway"/>
    <property type="evidence" value="ECO:0000315"/>
    <property type="project" value="BHF-UCL"/>
</dbReference>
<dbReference type="GO" id="GO:1900747">
    <property type="term" value="P:negative regulation of vascular endothelial growth factor signaling pathway"/>
    <property type="evidence" value="ECO:0000315"/>
    <property type="project" value="BHF-UCL"/>
</dbReference>
<dbReference type="GO" id="GO:0045766">
    <property type="term" value="P:positive regulation of angiogenesis"/>
    <property type="evidence" value="ECO:0000314"/>
    <property type="project" value="ComplexPortal"/>
</dbReference>
<dbReference type="GO" id="GO:0043065">
    <property type="term" value="P:positive regulation of apoptotic process"/>
    <property type="evidence" value="ECO:0000250"/>
    <property type="project" value="ComplexPortal"/>
</dbReference>
<dbReference type="GO" id="GO:0030194">
    <property type="term" value="P:positive regulation of blood coagulation"/>
    <property type="evidence" value="ECO:0000250"/>
    <property type="project" value="ComplexPortal"/>
</dbReference>
<dbReference type="GO" id="GO:0010811">
    <property type="term" value="P:positive regulation of cell-substrate adhesion"/>
    <property type="evidence" value="ECO:0000314"/>
    <property type="project" value="MGI"/>
</dbReference>
<dbReference type="GO" id="GO:1900426">
    <property type="term" value="P:positive regulation of defense response to bacterium"/>
    <property type="evidence" value="ECO:0000266"/>
    <property type="project" value="ComplexPortal"/>
</dbReference>
<dbReference type="GO" id="GO:1901203">
    <property type="term" value="P:positive regulation of extracellular matrix assembly"/>
    <property type="evidence" value="ECO:0000315"/>
    <property type="project" value="BHF-UCL"/>
</dbReference>
<dbReference type="GO" id="GO:0010628">
    <property type="term" value="P:positive regulation of gene expression"/>
    <property type="evidence" value="ECO:0000315"/>
    <property type="project" value="BHF-UCL"/>
</dbReference>
<dbReference type="GO" id="GO:1901731">
    <property type="term" value="P:positive regulation of platelet aggregation"/>
    <property type="evidence" value="ECO:0000250"/>
    <property type="project" value="ComplexPortal"/>
</dbReference>
<dbReference type="GO" id="GO:0008217">
    <property type="term" value="P:regulation of blood pressure"/>
    <property type="evidence" value="ECO:0000314"/>
    <property type="project" value="ComplexPortal"/>
</dbReference>
<dbReference type="GO" id="GO:0042127">
    <property type="term" value="P:regulation of cell population proliferation"/>
    <property type="evidence" value="ECO:0000315"/>
    <property type="project" value="ComplexPortal"/>
</dbReference>
<dbReference type="FunFam" id="2.60.120.40:FF:000010">
    <property type="entry name" value="EMILIN-1 protein"/>
    <property type="match status" value="1"/>
</dbReference>
<dbReference type="Gene3D" id="2.60.120.40">
    <property type="match status" value="1"/>
</dbReference>
<dbReference type="InterPro" id="IPR001073">
    <property type="entry name" value="C1q_dom"/>
</dbReference>
<dbReference type="InterPro" id="IPR008160">
    <property type="entry name" value="Collagen"/>
</dbReference>
<dbReference type="InterPro" id="IPR050392">
    <property type="entry name" value="Collagen/C1q_domain"/>
</dbReference>
<dbReference type="InterPro" id="IPR011489">
    <property type="entry name" value="EMI_domain"/>
</dbReference>
<dbReference type="InterPro" id="IPR008983">
    <property type="entry name" value="Tumour_necrosis_fac-like_dom"/>
</dbReference>
<dbReference type="PANTHER" id="PTHR15427">
    <property type="entry name" value="EMILIN ELASTIN MICROFIBRIL INTERFACE-LOCATED PROTEIN ELASTIN MICROFIBRIL INTERFACER"/>
    <property type="match status" value="1"/>
</dbReference>
<dbReference type="PANTHER" id="PTHR15427:SF1">
    <property type="entry name" value="EMILIN-1"/>
    <property type="match status" value="1"/>
</dbReference>
<dbReference type="Pfam" id="PF00386">
    <property type="entry name" value="C1q"/>
    <property type="match status" value="1"/>
</dbReference>
<dbReference type="Pfam" id="PF01391">
    <property type="entry name" value="Collagen"/>
    <property type="match status" value="1"/>
</dbReference>
<dbReference type="Pfam" id="PF07546">
    <property type="entry name" value="EMI"/>
    <property type="match status" value="1"/>
</dbReference>
<dbReference type="SMART" id="SM00110">
    <property type="entry name" value="C1Q"/>
    <property type="match status" value="1"/>
</dbReference>
<dbReference type="SUPFAM" id="SSF49842">
    <property type="entry name" value="TNF-like"/>
    <property type="match status" value="1"/>
</dbReference>
<dbReference type="PROSITE" id="PS50871">
    <property type="entry name" value="C1Q"/>
    <property type="match status" value="1"/>
</dbReference>
<dbReference type="PROSITE" id="PS51041">
    <property type="entry name" value="EMI"/>
    <property type="match status" value="1"/>
</dbReference>
<organism>
    <name type="scientific">Mus musculus</name>
    <name type="common">Mouse</name>
    <dbReference type="NCBI Taxonomy" id="10090"/>
    <lineage>
        <taxon>Eukaryota</taxon>
        <taxon>Metazoa</taxon>
        <taxon>Chordata</taxon>
        <taxon>Craniata</taxon>
        <taxon>Vertebrata</taxon>
        <taxon>Euteleostomi</taxon>
        <taxon>Mammalia</taxon>
        <taxon>Eutheria</taxon>
        <taxon>Euarchontoglires</taxon>
        <taxon>Glires</taxon>
        <taxon>Rodentia</taxon>
        <taxon>Myomorpha</taxon>
        <taxon>Muroidea</taxon>
        <taxon>Muridae</taxon>
        <taxon>Murinae</taxon>
        <taxon>Mus</taxon>
        <taxon>Mus</taxon>
    </lineage>
</organism>
<gene>
    <name type="primary">Emilin1</name>
</gene>
<evidence type="ECO:0000250" key="1"/>
<evidence type="ECO:0000250" key="2">
    <source>
        <dbReference type="UniProtKB" id="Q9Y6C2"/>
    </source>
</evidence>
<evidence type="ECO:0000255" key="3"/>
<evidence type="ECO:0000255" key="4">
    <source>
        <dbReference type="PROSITE-ProRule" id="PRU00368"/>
    </source>
</evidence>
<evidence type="ECO:0000255" key="5">
    <source>
        <dbReference type="PROSITE-ProRule" id="PRU00384"/>
    </source>
</evidence>
<evidence type="ECO:0000256" key="6">
    <source>
        <dbReference type="SAM" id="MobiDB-lite"/>
    </source>
</evidence>
<evidence type="ECO:0000269" key="7">
    <source>
    </source>
</evidence>
<evidence type="ECO:0000269" key="8">
    <source>
    </source>
</evidence>
<evidence type="ECO:0000269" key="9">
    <source>
    </source>
</evidence>
<reference key="1">
    <citation type="journal article" date="2005" name="Science">
        <title>The transcriptional landscape of the mammalian genome.</title>
        <authorList>
            <person name="Carninci P."/>
            <person name="Kasukawa T."/>
            <person name="Katayama S."/>
            <person name="Gough J."/>
            <person name="Frith M.C."/>
            <person name="Maeda N."/>
            <person name="Oyama R."/>
            <person name="Ravasi T."/>
            <person name="Lenhard B."/>
            <person name="Wells C."/>
            <person name="Kodzius R."/>
            <person name="Shimokawa K."/>
            <person name="Bajic V.B."/>
            <person name="Brenner S.E."/>
            <person name="Batalov S."/>
            <person name="Forrest A.R."/>
            <person name="Zavolan M."/>
            <person name="Davis M.J."/>
            <person name="Wilming L.G."/>
            <person name="Aidinis V."/>
            <person name="Allen J.E."/>
            <person name="Ambesi-Impiombato A."/>
            <person name="Apweiler R."/>
            <person name="Aturaliya R.N."/>
            <person name="Bailey T.L."/>
            <person name="Bansal M."/>
            <person name="Baxter L."/>
            <person name="Beisel K.W."/>
            <person name="Bersano T."/>
            <person name="Bono H."/>
            <person name="Chalk A.M."/>
            <person name="Chiu K.P."/>
            <person name="Choudhary V."/>
            <person name="Christoffels A."/>
            <person name="Clutterbuck D.R."/>
            <person name="Crowe M.L."/>
            <person name="Dalla E."/>
            <person name="Dalrymple B.P."/>
            <person name="de Bono B."/>
            <person name="Della Gatta G."/>
            <person name="di Bernardo D."/>
            <person name="Down T."/>
            <person name="Engstrom P."/>
            <person name="Fagiolini M."/>
            <person name="Faulkner G."/>
            <person name="Fletcher C.F."/>
            <person name="Fukushima T."/>
            <person name="Furuno M."/>
            <person name="Futaki S."/>
            <person name="Gariboldi M."/>
            <person name="Georgii-Hemming P."/>
            <person name="Gingeras T.R."/>
            <person name="Gojobori T."/>
            <person name="Green R.E."/>
            <person name="Gustincich S."/>
            <person name="Harbers M."/>
            <person name="Hayashi Y."/>
            <person name="Hensch T.K."/>
            <person name="Hirokawa N."/>
            <person name="Hill D."/>
            <person name="Huminiecki L."/>
            <person name="Iacono M."/>
            <person name="Ikeo K."/>
            <person name="Iwama A."/>
            <person name="Ishikawa T."/>
            <person name="Jakt M."/>
            <person name="Kanapin A."/>
            <person name="Katoh M."/>
            <person name="Kawasawa Y."/>
            <person name="Kelso J."/>
            <person name="Kitamura H."/>
            <person name="Kitano H."/>
            <person name="Kollias G."/>
            <person name="Krishnan S.P."/>
            <person name="Kruger A."/>
            <person name="Kummerfeld S.K."/>
            <person name="Kurochkin I.V."/>
            <person name="Lareau L.F."/>
            <person name="Lazarevic D."/>
            <person name="Lipovich L."/>
            <person name="Liu J."/>
            <person name="Liuni S."/>
            <person name="McWilliam S."/>
            <person name="Madan Babu M."/>
            <person name="Madera M."/>
            <person name="Marchionni L."/>
            <person name="Matsuda H."/>
            <person name="Matsuzawa S."/>
            <person name="Miki H."/>
            <person name="Mignone F."/>
            <person name="Miyake S."/>
            <person name="Morris K."/>
            <person name="Mottagui-Tabar S."/>
            <person name="Mulder N."/>
            <person name="Nakano N."/>
            <person name="Nakauchi H."/>
            <person name="Ng P."/>
            <person name="Nilsson R."/>
            <person name="Nishiguchi S."/>
            <person name="Nishikawa S."/>
            <person name="Nori F."/>
            <person name="Ohara O."/>
            <person name="Okazaki Y."/>
            <person name="Orlando V."/>
            <person name="Pang K.C."/>
            <person name="Pavan W.J."/>
            <person name="Pavesi G."/>
            <person name="Pesole G."/>
            <person name="Petrovsky N."/>
            <person name="Piazza S."/>
            <person name="Reed J."/>
            <person name="Reid J.F."/>
            <person name="Ring B.Z."/>
            <person name="Ringwald M."/>
            <person name="Rost B."/>
            <person name="Ruan Y."/>
            <person name="Salzberg S.L."/>
            <person name="Sandelin A."/>
            <person name="Schneider C."/>
            <person name="Schoenbach C."/>
            <person name="Sekiguchi K."/>
            <person name="Semple C.A."/>
            <person name="Seno S."/>
            <person name="Sessa L."/>
            <person name="Sheng Y."/>
            <person name="Shibata Y."/>
            <person name="Shimada H."/>
            <person name="Shimada K."/>
            <person name="Silva D."/>
            <person name="Sinclair B."/>
            <person name="Sperling S."/>
            <person name="Stupka E."/>
            <person name="Sugiura K."/>
            <person name="Sultana R."/>
            <person name="Takenaka Y."/>
            <person name="Taki K."/>
            <person name="Tammoja K."/>
            <person name="Tan S.L."/>
            <person name="Tang S."/>
            <person name="Taylor M.S."/>
            <person name="Tegner J."/>
            <person name="Teichmann S.A."/>
            <person name="Ueda H.R."/>
            <person name="van Nimwegen E."/>
            <person name="Verardo R."/>
            <person name="Wei C.L."/>
            <person name="Yagi K."/>
            <person name="Yamanishi H."/>
            <person name="Zabarovsky E."/>
            <person name="Zhu S."/>
            <person name="Zimmer A."/>
            <person name="Hide W."/>
            <person name="Bult C."/>
            <person name="Grimmond S.M."/>
            <person name="Teasdale R.D."/>
            <person name="Liu E.T."/>
            <person name="Brusic V."/>
            <person name="Quackenbush J."/>
            <person name="Wahlestedt C."/>
            <person name="Mattick J.S."/>
            <person name="Hume D.A."/>
            <person name="Kai C."/>
            <person name="Sasaki D."/>
            <person name="Tomaru Y."/>
            <person name="Fukuda S."/>
            <person name="Kanamori-Katayama M."/>
            <person name="Suzuki M."/>
            <person name="Aoki J."/>
            <person name="Arakawa T."/>
            <person name="Iida J."/>
            <person name="Imamura K."/>
            <person name="Itoh M."/>
            <person name="Kato T."/>
            <person name="Kawaji H."/>
            <person name="Kawagashira N."/>
            <person name="Kawashima T."/>
            <person name="Kojima M."/>
            <person name="Kondo S."/>
            <person name="Konno H."/>
            <person name="Nakano K."/>
            <person name="Ninomiya N."/>
            <person name="Nishio T."/>
            <person name="Okada M."/>
            <person name="Plessy C."/>
            <person name="Shibata K."/>
            <person name="Shiraki T."/>
            <person name="Suzuki S."/>
            <person name="Tagami M."/>
            <person name="Waki K."/>
            <person name="Watahiki A."/>
            <person name="Okamura-Oho Y."/>
            <person name="Suzuki H."/>
            <person name="Kawai J."/>
            <person name="Hayashizaki Y."/>
        </authorList>
    </citation>
    <scope>NUCLEOTIDE SEQUENCE [LARGE SCALE MRNA]</scope>
    <source>
        <strain>C57BL/6J</strain>
        <tissue>Head</tissue>
    </source>
</reference>
<reference key="2">
    <citation type="journal article" date="2004" name="Genome Res.">
        <title>The status, quality, and expansion of the NIH full-length cDNA project: the Mammalian Gene Collection (MGC).</title>
        <authorList>
            <consortium name="The MGC Project Team"/>
        </authorList>
    </citation>
    <scope>NUCLEOTIDE SEQUENCE [LARGE SCALE MRNA]</scope>
    <source>
        <tissue>Mammary tumor</tissue>
    </source>
</reference>
<reference key="3">
    <citation type="journal article" date="2002" name="Matrix Biol.">
        <title>Expression of the EMILIN-1 gene during mouse development.</title>
        <authorList>
            <person name="Braghetta P."/>
            <person name="Ferrari A."/>
            <person name="de Gemmis P."/>
            <person name="Zanetti M."/>
            <person name="Volpin D."/>
            <person name="Bonaldo P."/>
            <person name="Bressan G.M."/>
        </authorList>
    </citation>
    <scope>DEVELOPMENTAL STAGE</scope>
</reference>
<reference key="4">
    <citation type="journal article" date="2010" name="Cell">
        <title>A tissue-specific atlas of mouse protein phosphorylation and expression.</title>
        <authorList>
            <person name="Huttlin E.L."/>
            <person name="Jedrychowski M.P."/>
            <person name="Elias J.E."/>
            <person name="Goswami T."/>
            <person name="Rad R."/>
            <person name="Beausoleil S.A."/>
            <person name="Villen J."/>
            <person name="Haas W."/>
            <person name="Sowa M.E."/>
            <person name="Gygi S.P."/>
        </authorList>
    </citation>
    <scope>IDENTIFICATION BY MASS SPECTROMETRY [LARGE SCALE ANALYSIS]</scope>
    <source>
        <tissue>Lung</tissue>
        <tissue>Spleen</tissue>
    </source>
</reference>
<reference key="5">
    <citation type="journal article" date="2017" name="Sci. Rep.">
        <title>Fibulin-4 deposition requires EMILIN-1 in the extracellular matrix of osteoblasts.</title>
        <authorList>
            <person name="Schiavinato A."/>
            <person name="Keene D.R."/>
            <person name="Imhof T."/>
            <person name="Doliana R."/>
            <person name="Sasaki T."/>
            <person name="Sengle G."/>
        </authorList>
    </citation>
    <scope>INTERACTION WITH EFEMP2</scope>
</reference>
<reference key="6">
    <citation type="journal article" date="2022" name="Am. J. Hum. Genet.">
        <title>EMILIN1 deficiency causes arterial tortuosity with osteopenia and connects impaired elastogenesis with defective collagen fibrillogenesis.</title>
        <authorList>
            <person name="Adamo C.S."/>
            <person name="Beyens A."/>
            <person name="Schiavinato A."/>
            <person name="Keene D.R."/>
            <person name="Tufa S.F."/>
            <person name="Moergelin M."/>
            <person name="Brinckmann J."/>
            <person name="Sasaki T."/>
            <person name="Niehoff A."/>
            <person name="Dreiner M."/>
            <person name="Pottie L."/>
            <person name="Muino-Mosquera L."/>
            <person name="Gulec E.Y."/>
            <person name="Gezdirici A."/>
            <person name="Braghetta P."/>
            <person name="Bonaldo P."/>
            <person name="Wagener R."/>
            <person name="Paulsson M."/>
            <person name="Bornaun H."/>
            <person name="De Rycke R."/>
            <person name="De Bruyne M."/>
            <person name="Baeke F."/>
            <person name="Devine W.P."/>
            <person name="Gangaram B."/>
            <person name="Tam A."/>
            <person name="Balasubramanian M."/>
            <person name="Ellard S."/>
            <person name="Moore S."/>
            <person name="Symoens S."/>
            <person name="Shen J."/>
            <person name="Cole S."/>
            <person name="Schwarze U."/>
            <person name="Holmes K.W."/>
            <person name="Hayflick S.J."/>
            <person name="Wiszniewski W."/>
            <person name="Nampoothiri S."/>
            <person name="Davis E.C."/>
            <person name="Sakai L.Y."/>
            <person name="Sengle G."/>
            <person name="Callewaert B."/>
        </authorList>
    </citation>
    <scope>DISRUPTION PHENOTYPE</scope>
    <scope>FUNCTION</scope>
</reference>
<protein>
    <recommendedName>
        <fullName>EMILIN-1</fullName>
    </recommendedName>
    <alternativeName>
        <fullName>Elastin microfibril interface-located protein 1</fullName>
        <shortName>Elastin microfibril interfacer 1</shortName>
    </alternativeName>
</protein>
<keyword id="KW-0130">Cell adhesion</keyword>
<keyword id="KW-0175">Coiled coil</keyword>
<keyword id="KW-0176">Collagen</keyword>
<keyword id="KW-1015">Disulfide bond</keyword>
<keyword id="KW-0272">Extracellular matrix</keyword>
<keyword id="KW-0325">Glycoprotein</keyword>
<keyword id="KW-1185">Reference proteome</keyword>
<keyword id="KW-0964">Secreted</keyword>
<keyword id="KW-0732">Signal</keyword>
<sequence length="1017" mass="107585">MAPRALWSCYLCCLLTIATEAASYPPRGYSLYTGGTGALSPGGPQAQNSPRPASRHRNWCAYVVTRTVSCVLEDGVETIVKPDYQPCGWGQPHCSRSIMYRSFLRPRYRVAYKTVTDMEWRCCQGYGGDDCGEGPASVLGPAPSTPLPRPRPVRPNLSGSSAGSHLSGLGGEGPVESEKVQQLERQVKSLTKELQGLRGVLQGMNGRLAEDVQRAVDTVFNGRQQPADAAARPGVHETLSEIQQQLQLLDNRVSTHDQELGHLNNHHNGGPGGGGRASGPVPVPSGPSEELLRQLERQLQESCSVCLTGLDGFRQQQQEDRERLRTLEKLMSSMEERQQQLVGPAMARRPPQECCPPELGRRVSELERRLDVVTGSLTVLSGRRGSELGGAAGQGGHPPGYTSLASRLSRLEDRFNSTLGPSEEQEKNWPGGPGRLGHWLPAAPGRLEKLEGLLANVSRELGGRMDLLEEQVAGAVRTCGQICSGAPGEQDSRVNEILSALERRVLDSEGRLQLVGSGLHEAEAAGEAQQAVLEGLQGLLSRLRERMDAQEETAAEILLRLNLTAAQLSQLEGLLQARGDEGCGACGGVQEELGRLRDGVERCSCPLLPPRGPGAGPGVGGPSRGPLDGFSVFGGSSGSALQALQGELSEVILTFSSLNDSLHELQTTVEGQGADLADLGATKDSIISEINRLQQEATEHVTESEERFRGLEEGQAQAGQCPSLEGRLGRLEGVCERLDTVAGGLQGLREGLSRHVAGLWAAVRESNSTSLTQAALLEKLLGGQAGLGRRLGALNNSLLLLEDRLQQLSLKDFTGPSGKAGPPGPPGLQGPSGPAGPPGPPGKDGQQGAIGPPGPQGEQGAEGAPAAPVPRVAFSAALSLPRSEPGTVPFDRVLLNDGGYYDPETGVFTAPLAGRYLLSAVLTGHRHEKVEAVLSRSNLGVARIDSGGYEPEGLENKPVAESQPSPGALGVFSLILPLQVGDTVCIDLVMGQLAHSEEPLTIFSGALLYEDTELEQV</sequence>
<feature type="signal peptide" evidence="2">
    <location>
        <begin position="1"/>
        <end position="21"/>
    </location>
</feature>
<feature type="chain" id="PRO_0000007816" description="EMILIN-1">
    <location>
        <begin position="22"/>
        <end position="1017"/>
    </location>
</feature>
<feature type="domain" description="EMI" evidence="5">
    <location>
        <begin position="56"/>
        <end position="133"/>
    </location>
</feature>
<feature type="domain" description="Collagen-like">
    <location>
        <begin position="815"/>
        <end position="865"/>
    </location>
</feature>
<feature type="domain" description="C1q" evidence="4">
    <location>
        <begin position="867"/>
        <end position="1014"/>
    </location>
</feature>
<feature type="region of interest" description="Disordered" evidence="6">
    <location>
        <begin position="134"/>
        <end position="180"/>
    </location>
</feature>
<feature type="region of interest" description="Disordered" evidence="6">
    <location>
        <begin position="259"/>
        <end position="289"/>
    </location>
</feature>
<feature type="region of interest" description="Disordered" evidence="6">
    <location>
        <begin position="383"/>
        <end position="403"/>
    </location>
</feature>
<feature type="region of interest" description="Disordered" evidence="6">
    <location>
        <begin position="811"/>
        <end position="866"/>
    </location>
</feature>
<feature type="coiled-coil region" evidence="3">
    <location>
        <begin position="171"/>
        <end position="211"/>
    </location>
</feature>
<feature type="coiled-coil region" evidence="3">
    <location>
        <begin position="237"/>
        <end position="266"/>
    </location>
</feature>
<feature type="coiled-coil region" evidence="3">
    <location>
        <begin position="310"/>
        <end position="374"/>
    </location>
</feature>
<feature type="coiled-coil region" evidence="3">
    <location>
        <begin position="519"/>
        <end position="573"/>
    </location>
</feature>
<feature type="coiled-coil region" evidence="3">
    <location>
        <begin position="676"/>
        <end position="697"/>
    </location>
</feature>
<feature type="coiled-coil region" evidence="3">
    <location>
        <begin position="789"/>
        <end position="809"/>
    </location>
</feature>
<feature type="compositionally biased region" description="Low complexity" evidence="6">
    <location>
        <begin position="154"/>
        <end position="167"/>
    </location>
</feature>
<feature type="compositionally biased region" description="Gly residues" evidence="6">
    <location>
        <begin position="387"/>
        <end position="398"/>
    </location>
</feature>
<feature type="compositionally biased region" description="Low complexity" evidence="6">
    <location>
        <begin position="811"/>
        <end position="820"/>
    </location>
</feature>
<feature type="compositionally biased region" description="Pro residues" evidence="6">
    <location>
        <begin position="822"/>
        <end position="841"/>
    </location>
</feature>
<feature type="compositionally biased region" description="Low complexity" evidence="6">
    <location>
        <begin position="843"/>
        <end position="866"/>
    </location>
</feature>
<feature type="glycosylation site" description="N-linked (GlcNAc...) asparagine" evidence="3">
    <location>
        <position position="156"/>
    </location>
</feature>
<feature type="glycosylation site" description="N-linked (GlcNAc...) asparagine" evidence="3">
    <location>
        <position position="416"/>
    </location>
</feature>
<feature type="glycosylation site" description="N-linked (GlcNAc...) asparagine" evidence="3">
    <location>
        <position position="456"/>
    </location>
</feature>
<feature type="glycosylation site" description="N-linked (GlcNAc...) asparagine" evidence="3">
    <location>
        <position position="562"/>
    </location>
</feature>
<feature type="glycosylation site" description="N-linked (GlcNAc...) asparagine" evidence="3">
    <location>
        <position position="659"/>
    </location>
</feature>
<feature type="glycosylation site" description="N-linked (GlcNAc...) asparagine" evidence="3">
    <location>
        <position position="767"/>
    </location>
</feature>
<feature type="glycosylation site" description="N-linked (GlcNAc...) asparagine" evidence="3">
    <location>
        <position position="795"/>
    </location>
</feature>
<feature type="disulfide bond" evidence="5">
    <location>
        <begin position="60"/>
        <end position="123"/>
    </location>
</feature>
<feature type="disulfide bond" evidence="5">
    <location>
        <begin position="87"/>
        <end position="94"/>
    </location>
</feature>
<feature type="disulfide bond" evidence="5">
    <location>
        <begin position="122"/>
        <end position="131"/>
    </location>
</feature>
<accession>Q99K41</accession>
<name>EMIL1_MOUSE</name>